<proteinExistence type="inferred from homology"/>
<dbReference type="EMBL" id="CP001130">
    <property type="protein sequence ID" value="ACG56968.1"/>
    <property type="molecule type" value="Genomic_DNA"/>
</dbReference>
<dbReference type="RefSeq" id="WP_012513324.1">
    <property type="nucleotide sequence ID" value="NC_011126.1"/>
</dbReference>
<dbReference type="SMR" id="B4U757"/>
<dbReference type="STRING" id="380749.HY04AAS1_0278"/>
<dbReference type="KEGG" id="hya:HY04AAS1_0278"/>
<dbReference type="eggNOG" id="COG0199">
    <property type="taxonomic scope" value="Bacteria"/>
</dbReference>
<dbReference type="HOGENOM" id="CLU_139869_3_0_0"/>
<dbReference type="OrthoDB" id="9810484at2"/>
<dbReference type="GO" id="GO:0005737">
    <property type="term" value="C:cytoplasm"/>
    <property type="evidence" value="ECO:0007669"/>
    <property type="project" value="UniProtKB-ARBA"/>
</dbReference>
<dbReference type="GO" id="GO:0015935">
    <property type="term" value="C:small ribosomal subunit"/>
    <property type="evidence" value="ECO:0007669"/>
    <property type="project" value="TreeGrafter"/>
</dbReference>
<dbReference type="GO" id="GO:0019843">
    <property type="term" value="F:rRNA binding"/>
    <property type="evidence" value="ECO:0007669"/>
    <property type="project" value="UniProtKB-UniRule"/>
</dbReference>
<dbReference type="GO" id="GO:0003735">
    <property type="term" value="F:structural constituent of ribosome"/>
    <property type="evidence" value="ECO:0007669"/>
    <property type="project" value="InterPro"/>
</dbReference>
<dbReference type="GO" id="GO:0008270">
    <property type="term" value="F:zinc ion binding"/>
    <property type="evidence" value="ECO:0007669"/>
    <property type="project" value="UniProtKB-UniRule"/>
</dbReference>
<dbReference type="GO" id="GO:0006412">
    <property type="term" value="P:translation"/>
    <property type="evidence" value="ECO:0007669"/>
    <property type="project" value="UniProtKB-UniRule"/>
</dbReference>
<dbReference type="Gene3D" id="4.10.830.10">
    <property type="entry name" value="30s Ribosomal Protein S14, Chain N"/>
    <property type="match status" value="1"/>
</dbReference>
<dbReference type="HAMAP" id="MF_01364_B">
    <property type="entry name" value="Ribosomal_uS14_2_B"/>
    <property type="match status" value="1"/>
</dbReference>
<dbReference type="InterPro" id="IPR001209">
    <property type="entry name" value="Ribosomal_uS14"/>
</dbReference>
<dbReference type="InterPro" id="IPR023053">
    <property type="entry name" value="Ribosomal_uS14_bact"/>
</dbReference>
<dbReference type="InterPro" id="IPR018271">
    <property type="entry name" value="Ribosomal_uS14_CS"/>
</dbReference>
<dbReference type="InterPro" id="IPR043140">
    <property type="entry name" value="Ribosomal_uS14_sf"/>
</dbReference>
<dbReference type="NCBIfam" id="NF005974">
    <property type="entry name" value="PRK08061.1"/>
    <property type="match status" value="1"/>
</dbReference>
<dbReference type="PANTHER" id="PTHR19836">
    <property type="entry name" value="30S RIBOSOMAL PROTEIN S14"/>
    <property type="match status" value="1"/>
</dbReference>
<dbReference type="PANTHER" id="PTHR19836:SF19">
    <property type="entry name" value="SMALL RIBOSOMAL SUBUNIT PROTEIN US14M"/>
    <property type="match status" value="1"/>
</dbReference>
<dbReference type="Pfam" id="PF00253">
    <property type="entry name" value="Ribosomal_S14"/>
    <property type="match status" value="1"/>
</dbReference>
<dbReference type="SUPFAM" id="SSF57716">
    <property type="entry name" value="Glucocorticoid receptor-like (DNA-binding domain)"/>
    <property type="match status" value="1"/>
</dbReference>
<dbReference type="PROSITE" id="PS00527">
    <property type="entry name" value="RIBOSOMAL_S14"/>
    <property type="match status" value="1"/>
</dbReference>
<accession>B4U757</accession>
<reference key="1">
    <citation type="journal article" date="2009" name="J. Bacteriol.">
        <title>Complete and draft genome sequences of six members of the Aquificales.</title>
        <authorList>
            <person name="Reysenbach A.-L."/>
            <person name="Hamamura N."/>
            <person name="Podar M."/>
            <person name="Griffiths E."/>
            <person name="Ferreira S."/>
            <person name="Hochstein R."/>
            <person name="Heidelberg J."/>
            <person name="Johnson J."/>
            <person name="Mead D."/>
            <person name="Pohorille A."/>
            <person name="Sarmiento M."/>
            <person name="Schweighofer K."/>
            <person name="Seshadri R."/>
            <person name="Voytek M.A."/>
        </authorList>
    </citation>
    <scope>NUCLEOTIDE SEQUENCE [LARGE SCALE GENOMIC DNA]</scope>
    <source>
        <strain>Y04AAS1</strain>
    </source>
</reference>
<keyword id="KW-0479">Metal-binding</keyword>
<keyword id="KW-0687">Ribonucleoprotein</keyword>
<keyword id="KW-0689">Ribosomal protein</keyword>
<keyword id="KW-0694">RNA-binding</keyword>
<keyword id="KW-0699">rRNA-binding</keyword>
<keyword id="KW-0862">Zinc</keyword>
<feature type="chain" id="PRO_1000166771" description="Small ribosomal subunit protein uS14">
    <location>
        <begin position="1"/>
        <end position="62"/>
    </location>
</feature>
<feature type="binding site" evidence="1">
    <location>
        <position position="25"/>
    </location>
    <ligand>
        <name>Zn(2+)</name>
        <dbReference type="ChEBI" id="CHEBI:29105"/>
    </ligand>
</feature>
<feature type="binding site" evidence="1">
    <location>
        <position position="28"/>
    </location>
    <ligand>
        <name>Zn(2+)</name>
        <dbReference type="ChEBI" id="CHEBI:29105"/>
    </ligand>
</feature>
<feature type="binding site" evidence="1">
    <location>
        <position position="41"/>
    </location>
    <ligand>
        <name>Zn(2+)</name>
        <dbReference type="ChEBI" id="CHEBI:29105"/>
    </ligand>
</feature>
<feature type="binding site" evidence="1">
    <location>
        <position position="44"/>
    </location>
    <ligand>
        <name>Zn(2+)</name>
        <dbReference type="ChEBI" id="CHEBI:29105"/>
    </ligand>
</feature>
<protein>
    <recommendedName>
        <fullName evidence="1">Small ribosomal subunit protein uS14</fullName>
    </recommendedName>
    <alternativeName>
        <fullName evidence="2">30S ribosomal protein S14 type Z</fullName>
    </alternativeName>
</protein>
<comment type="function">
    <text evidence="1">Binds 16S rRNA, required for the assembly of 30S particles and may also be responsible for determining the conformation of the 16S rRNA at the A site.</text>
</comment>
<comment type="cofactor">
    <cofactor evidence="1">
        <name>Zn(2+)</name>
        <dbReference type="ChEBI" id="CHEBI:29105"/>
    </cofactor>
    <text evidence="1">Binds 1 zinc ion per subunit.</text>
</comment>
<comment type="subunit">
    <text evidence="1">Part of the 30S ribosomal subunit. Contacts proteins S3 and S10.</text>
</comment>
<comment type="similarity">
    <text evidence="1">Belongs to the universal ribosomal protein uS14 family. Zinc-binding uS14 subfamily.</text>
</comment>
<gene>
    <name evidence="1" type="primary">rpsZ</name>
    <name evidence="1" type="synonym">rpsN</name>
    <name type="ordered locus">HY04AAS1_0278</name>
</gene>
<evidence type="ECO:0000255" key="1">
    <source>
        <dbReference type="HAMAP-Rule" id="MF_01364"/>
    </source>
</evidence>
<evidence type="ECO:0000305" key="2"/>
<sequence length="62" mass="7358">MPRKAKVVKDLKHFPKYATRQKNRCPICGRPRGFLRRFNMCRLCFREMALSGEITGVRKSSW</sequence>
<name>RS14Z_HYDS0</name>
<organism>
    <name type="scientific">Hydrogenobaculum sp. (strain Y04AAS1)</name>
    <dbReference type="NCBI Taxonomy" id="380749"/>
    <lineage>
        <taxon>Bacteria</taxon>
        <taxon>Pseudomonadati</taxon>
        <taxon>Aquificota</taxon>
        <taxon>Aquificia</taxon>
        <taxon>Aquificales</taxon>
        <taxon>Aquificaceae</taxon>
        <taxon>Hydrogenobaculum</taxon>
    </lineage>
</organism>